<sequence>MVGSKMAASIRERQTVALKRMLNFNVPHVKNSPGEPVWKVLIYDRFGQDIISPLLSVKELRDMGITLHLLLHSDRDPIRDVPAVYFVMPTEENIDRLCQDLRNQLYESYYLNFISAISRSKLEDIANAALAANAVTQVAKVFDQYLNFITLEEDMFVLCNQNKELVSYRAINRPDITDTEMETVMDTIVDSLFCFFVTLGAVPIIRCSRGTAAEMVAVKLDKKLRENLRDARNSLFTGDPLGTGQFSFQRPLLVLVDRNIDLATPLHHTWTYQALVHDVLDFHLNRVNLEESTGVENSPTGARPKRKNKKSYDLTPVDKFWQKHKGSPFPEVAESVQQELESYRAQEDEVKRLKSIMGLEGEDEGAISMLSDNTAKLTSAVSSLPELLEKKRLIDLHTNVATAVLEHIKARKLDVYFEYEEKIMSKTTLDKSLLDVISDPDAGTPEDKMRLFLIYYISAQQAPSEVDLEQYKKALTDAGCNLSPLQYIKQWKAFAKMASTPASYGNTTTKPMGLLSRVMNTGSQFVMEGVKNLVLKQQNLPVTRILDNLMEMKSNPETDDYRYFDPKMLRSNDSSVPRNKSPFQEAIVFVVGGGNYIEYQNLVDYIKGKQGKHILYGCSEIFNATQFIKQLSQLGQK</sequence>
<proteinExistence type="evidence at protein level"/>
<organism>
    <name type="scientific">Rattus norvegicus</name>
    <name type="common">Rat</name>
    <dbReference type="NCBI Taxonomy" id="10116"/>
    <lineage>
        <taxon>Eukaryota</taxon>
        <taxon>Metazoa</taxon>
        <taxon>Chordata</taxon>
        <taxon>Craniata</taxon>
        <taxon>Vertebrata</taxon>
        <taxon>Euteleostomi</taxon>
        <taxon>Mammalia</taxon>
        <taxon>Eutheria</taxon>
        <taxon>Euarchontoglires</taxon>
        <taxon>Glires</taxon>
        <taxon>Rodentia</taxon>
        <taxon>Myomorpha</taxon>
        <taxon>Muroidea</taxon>
        <taxon>Muridae</taxon>
        <taxon>Murinae</taxon>
        <taxon>Rattus</taxon>
    </lineage>
</organism>
<comment type="function">
    <text evidence="3 5 6">Plays a role in SNARE-pin assembly and Golgi-to-ER retrograde transport via its interaction with COG4. Involved in vesicular transport between the endoplasmic reticulum and the Golgi.</text>
</comment>
<comment type="subunit">
    <text evidence="2 3 5 7">Interacts with STX17 (Probable). Interacts with the COG complex via COG4. Interacts with STX5A.</text>
</comment>
<comment type="subcellular location">
    <subcellularLocation>
        <location evidence="6">Cytoplasm</location>
    </subcellularLocation>
    <subcellularLocation>
        <location evidence="6">Endoplasmic reticulum membrane</location>
        <topology evidence="6">Peripheral membrane protein</topology>
    </subcellularLocation>
    <subcellularLocation>
        <location evidence="6">Golgi apparatus</location>
        <location evidence="6">Golgi stack membrane</location>
        <topology evidence="6">Peripheral membrane protein</topology>
    </subcellularLocation>
</comment>
<comment type="tissue specificity">
    <text evidence="4 6">Highly expressed in testis. Detected at lower levels in brain, astrocytes, heart and small intestine.</text>
</comment>
<comment type="induction">
    <text evidence="6">Up-regulated in astrocytes upon reoxygenation after hypoxia.</text>
</comment>
<comment type="similarity">
    <text evidence="7">Belongs to the STXBP/unc-18/SEC1 family.</text>
</comment>
<comment type="sequence caution" evidence="7">
    <conflict type="erroneous initiation">
        <sequence resource="EMBL-CDS" id="AAB08009"/>
    </conflict>
</comment>
<gene>
    <name type="primary">Scfd1</name>
    <name type="synonym">Ra410</name>
    <name type="synonym">Sly1</name>
    <name type="synonym">Stxbp1l2</name>
</gene>
<dbReference type="EMBL" id="U57687">
    <property type="protein sequence ID" value="AAC52636.1"/>
    <property type="molecule type" value="mRNA"/>
</dbReference>
<dbReference type="EMBL" id="D79221">
    <property type="protein sequence ID" value="BAA24276.1"/>
    <property type="molecule type" value="mRNA"/>
</dbReference>
<dbReference type="EMBL" id="U35364">
    <property type="protein sequence ID" value="AAB08009.1"/>
    <property type="status" value="ALT_INIT"/>
    <property type="molecule type" value="mRNA"/>
</dbReference>
<dbReference type="PIR" id="JC4674">
    <property type="entry name" value="JC4674"/>
</dbReference>
<dbReference type="RefSeq" id="NP_062237.1">
    <property type="nucleotide sequence ID" value="NM_019364.1"/>
</dbReference>
<dbReference type="PDB" id="1Y9J">
    <property type="method" value="NMR"/>
    <property type="chains" value="A=2-147"/>
</dbReference>
<dbReference type="PDBsum" id="1Y9J"/>
<dbReference type="SMR" id="Q62991"/>
<dbReference type="BioGRID" id="248542">
    <property type="interactions" value="1"/>
</dbReference>
<dbReference type="CORUM" id="Q62991"/>
<dbReference type="FunCoup" id="Q62991">
    <property type="interactions" value="4149"/>
</dbReference>
<dbReference type="IntAct" id="Q62991">
    <property type="interactions" value="3"/>
</dbReference>
<dbReference type="STRING" id="10116.ENSRNOP00000039132"/>
<dbReference type="iPTMnet" id="Q62991"/>
<dbReference type="PhosphoSitePlus" id="Q62991"/>
<dbReference type="jPOST" id="Q62991"/>
<dbReference type="PaxDb" id="10116-ENSRNOP00000039132"/>
<dbReference type="Ensembl" id="ENSRNOT00000040548.3">
    <property type="protein sequence ID" value="ENSRNOP00000039132.1"/>
    <property type="gene ID" value="ENSRNOG00000031203.6"/>
</dbReference>
<dbReference type="GeneID" id="54350"/>
<dbReference type="KEGG" id="rno:54350"/>
<dbReference type="UCSC" id="RGD:619828">
    <property type="organism name" value="rat"/>
</dbReference>
<dbReference type="AGR" id="RGD:619828"/>
<dbReference type="CTD" id="23256"/>
<dbReference type="RGD" id="619828">
    <property type="gene designation" value="Scfd1"/>
</dbReference>
<dbReference type="eggNOG" id="KOG1301">
    <property type="taxonomic scope" value="Eukaryota"/>
</dbReference>
<dbReference type="GeneTree" id="ENSGT00550000074845"/>
<dbReference type="HOGENOM" id="CLU_016216_3_1_1"/>
<dbReference type="InParanoid" id="Q62991"/>
<dbReference type="OMA" id="VNDLRAW"/>
<dbReference type="OrthoDB" id="10251230at2759"/>
<dbReference type="PhylomeDB" id="Q62991"/>
<dbReference type="TreeFam" id="TF105740"/>
<dbReference type="Reactome" id="R-RNO-204005">
    <property type="pathway name" value="COPII-mediated vesicle transport"/>
</dbReference>
<dbReference type="Reactome" id="R-RNO-8980692">
    <property type="pathway name" value="RHOA GTPase cycle"/>
</dbReference>
<dbReference type="EvolutionaryTrace" id="Q62991"/>
<dbReference type="PRO" id="PR:Q62991"/>
<dbReference type="Proteomes" id="UP000002494">
    <property type="component" value="Chromosome 6"/>
</dbReference>
<dbReference type="Bgee" id="ENSRNOG00000031203">
    <property type="expression patterns" value="Expressed in jejunum and 20 other cell types or tissues"/>
</dbReference>
<dbReference type="GO" id="GO:0005801">
    <property type="term" value="C:cis-Golgi network"/>
    <property type="evidence" value="ECO:0000266"/>
    <property type="project" value="RGD"/>
</dbReference>
<dbReference type="GO" id="GO:0005789">
    <property type="term" value="C:endoplasmic reticulum membrane"/>
    <property type="evidence" value="ECO:0007669"/>
    <property type="project" value="UniProtKB-SubCell"/>
</dbReference>
<dbReference type="GO" id="GO:0032580">
    <property type="term" value="C:Golgi cisterna membrane"/>
    <property type="evidence" value="ECO:0007669"/>
    <property type="project" value="UniProtKB-SubCell"/>
</dbReference>
<dbReference type="GO" id="GO:0000139">
    <property type="term" value="C:Golgi membrane"/>
    <property type="evidence" value="ECO:0000318"/>
    <property type="project" value="GO_Central"/>
</dbReference>
<dbReference type="GO" id="GO:0005798">
    <property type="term" value="C:Golgi-associated vesicle"/>
    <property type="evidence" value="ECO:0000314"/>
    <property type="project" value="RGD"/>
</dbReference>
<dbReference type="GO" id="GO:0044877">
    <property type="term" value="F:protein-containing complex binding"/>
    <property type="evidence" value="ECO:0000314"/>
    <property type="project" value="UniProtKB"/>
</dbReference>
<dbReference type="GO" id="GO:0019905">
    <property type="term" value="F:syntaxin binding"/>
    <property type="evidence" value="ECO:0000314"/>
    <property type="project" value="RGD"/>
</dbReference>
<dbReference type="GO" id="GO:0006888">
    <property type="term" value="P:endoplasmic reticulum to Golgi vesicle-mediated transport"/>
    <property type="evidence" value="ECO:0000318"/>
    <property type="project" value="GO_Central"/>
</dbReference>
<dbReference type="GO" id="GO:0006886">
    <property type="term" value="P:intracellular protein transport"/>
    <property type="evidence" value="ECO:0000318"/>
    <property type="project" value="GO_Central"/>
</dbReference>
<dbReference type="GO" id="GO:1902902">
    <property type="term" value="P:negative regulation of autophagosome assembly"/>
    <property type="evidence" value="ECO:0000266"/>
    <property type="project" value="RGD"/>
</dbReference>
<dbReference type="GO" id="GO:0006892">
    <property type="term" value="P:post-Golgi vesicle-mediated transport"/>
    <property type="evidence" value="ECO:0000314"/>
    <property type="project" value="RGD"/>
</dbReference>
<dbReference type="GO" id="GO:0060628">
    <property type="term" value="P:regulation of ER to Golgi vesicle-mediated transport"/>
    <property type="evidence" value="ECO:0000315"/>
    <property type="project" value="RGD"/>
</dbReference>
<dbReference type="GO" id="GO:0051223">
    <property type="term" value="P:regulation of protein transport"/>
    <property type="evidence" value="ECO:0000266"/>
    <property type="project" value="RGD"/>
</dbReference>
<dbReference type="GO" id="GO:0001666">
    <property type="term" value="P:response to hypoxia"/>
    <property type="evidence" value="ECO:0000270"/>
    <property type="project" value="RGD"/>
</dbReference>
<dbReference type="GO" id="GO:0009636">
    <property type="term" value="P:response to toxic substance"/>
    <property type="evidence" value="ECO:0000266"/>
    <property type="project" value="RGD"/>
</dbReference>
<dbReference type="GO" id="GO:0006890">
    <property type="term" value="P:retrograde vesicle-mediated transport, Golgi to endoplasmic reticulum"/>
    <property type="evidence" value="ECO:0000315"/>
    <property type="project" value="UniProtKB"/>
</dbReference>
<dbReference type="FunFam" id="1.25.40.60:FF:000002">
    <property type="entry name" value="Sec1 family domain containing 1"/>
    <property type="match status" value="1"/>
</dbReference>
<dbReference type="FunFam" id="3.40.50.2060:FF:000002">
    <property type="entry name" value="sec1 family domain-containing protein 1"/>
    <property type="match status" value="1"/>
</dbReference>
<dbReference type="Gene3D" id="1.25.40.60">
    <property type="match status" value="1"/>
</dbReference>
<dbReference type="Gene3D" id="3.40.50.1910">
    <property type="match status" value="1"/>
</dbReference>
<dbReference type="Gene3D" id="3.40.50.2060">
    <property type="match status" value="1"/>
</dbReference>
<dbReference type="Gene3D" id="3.90.830.10">
    <property type="entry name" value="Syntaxin Binding Protein 1, Chain A, domain 2"/>
    <property type="match status" value="1"/>
</dbReference>
<dbReference type="InterPro" id="IPR043154">
    <property type="entry name" value="Sec-1-like_dom1"/>
</dbReference>
<dbReference type="InterPro" id="IPR043127">
    <property type="entry name" value="Sec-1-like_dom3a"/>
</dbReference>
<dbReference type="InterPro" id="IPR001619">
    <property type="entry name" value="Sec1-like"/>
</dbReference>
<dbReference type="InterPro" id="IPR027482">
    <property type="entry name" value="Sec1-like_dom2"/>
</dbReference>
<dbReference type="InterPro" id="IPR036045">
    <property type="entry name" value="Sec1-like_sf"/>
</dbReference>
<dbReference type="PANTHER" id="PTHR11679">
    <property type="entry name" value="VESICLE PROTEIN SORTING-ASSOCIATED"/>
    <property type="match status" value="1"/>
</dbReference>
<dbReference type="Pfam" id="PF00995">
    <property type="entry name" value="Sec1"/>
    <property type="match status" value="1"/>
</dbReference>
<dbReference type="PIRSF" id="PIRSF005715">
    <property type="entry name" value="VPS45_Sec1"/>
    <property type="match status" value="1"/>
</dbReference>
<dbReference type="SUPFAM" id="SSF56815">
    <property type="entry name" value="Sec1/munc18-like (SM) proteins"/>
    <property type="match status" value="1"/>
</dbReference>
<evidence type="ECO:0000250" key="1">
    <source>
        <dbReference type="UniProtKB" id="Q8WVM8"/>
    </source>
</evidence>
<evidence type="ECO:0000269" key="2">
    <source>
    </source>
</evidence>
<evidence type="ECO:0000269" key="3">
    <source>
    </source>
</evidence>
<evidence type="ECO:0000269" key="4">
    <source>
    </source>
</evidence>
<evidence type="ECO:0000269" key="5">
    <source>
    </source>
</evidence>
<evidence type="ECO:0000269" key="6">
    <source>
    </source>
</evidence>
<evidence type="ECO:0000305" key="7"/>
<evidence type="ECO:0007744" key="8">
    <source>
    </source>
</evidence>
<evidence type="ECO:0007829" key="9">
    <source>
        <dbReference type="PDB" id="1Y9J"/>
    </source>
</evidence>
<name>SCFD1_RAT</name>
<accession>Q62991</accession>
<accession>Q62843</accession>
<keyword id="KW-0002">3D-structure</keyword>
<keyword id="KW-0963">Cytoplasm</keyword>
<keyword id="KW-0903">Direct protein sequencing</keyword>
<keyword id="KW-0256">Endoplasmic reticulum</keyword>
<keyword id="KW-0931">ER-Golgi transport</keyword>
<keyword id="KW-0333">Golgi apparatus</keyword>
<keyword id="KW-0472">Membrane</keyword>
<keyword id="KW-0597">Phosphoprotein</keyword>
<keyword id="KW-0653">Protein transport</keyword>
<keyword id="KW-1185">Reference proteome</keyword>
<keyword id="KW-0813">Transport</keyword>
<reference key="1">
    <citation type="journal article" date="1996" name="J. Biol. Chem.">
        <title>Mammalian Sly1 regulates syntaxin 5 function in endoplasmic reticulum to Golgi transport.</title>
        <authorList>
            <person name="Dascher C."/>
            <person name="Balch W.E."/>
        </authorList>
    </citation>
    <scope>NUCLEOTIDE SEQUENCE [MRNA]</scope>
    <scope>PROTEIN SEQUENCE OF 21-30; 81-92; 211-219 AND 554-561</scope>
    <scope>FUNCTION</scope>
    <scope>INTERACTION WITH STX5A</scope>
    <source>
        <strain>Sprague-Dawley</strain>
        <tissue>Liver</tissue>
    </source>
</reference>
<reference key="2">
    <citation type="journal article" date="1997" name="J. Biol. Chem.">
        <title>Cloning of a putative vesicle transport-related protein, RA410, from cultured rat astrocytes and its expression in ischemic rat brain.</title>
        <authorList>
            <person name="Matsuo N."/>
            <person name="Ogawa S."/>
            <person name="Takagi T."/>
            <person name="Wanaka A."/>
            <person name="Mori T."/>
            <person name="Matsuyama T."/>
            <person name="Pinsky D.J."/>
            <person name="Stern D.M."/>
            <person name="Tohyama M."/>
        </authorList>
    </citation>
    <scope>NUCLEOTIDE SEQUENCE [MRNA]</scope>
    <scope>FUNCTION</scope>
    <scope>INDUCTION</scope>
    <scope>TISSUE SPECIFICITY</scope>
    <scope>SUBCELLULAR LOCATION</scope>
    <source>
        <tissue>Brain</tissue>
    </source>
</reference>
<reference key="3">
    <citation type="journal article" date="1996" name="Gene">
        <title>A mammalian homologue of SLY1, a yeast gene required for transport from endoplasmic reticulum to Golgi.</title>
        <authorList>
            <person name="Peterson M.R."/>
            <person name="Hsu S.C."/>
            <person name="Scheller R.H."/>
        </authorList>
    </citation>
    <scope>NUCLEOTIDE SEQUENCE [MRNA] OF 9-637</scope>
    <scope>TISSUE SPECIFICITY</scope>
    <source>
        <tissue>Brain</tissue>
    </source>
</reference>
<reference key="4">
    <citation type="journal article" date="2000" name="Mol. Biol. Cell">
        <title>Syntaxin 17 is abundant in steroidogenic cells and implicated in smooth endoplasmic reticulum membrane dynamics.</title>
        <authorList>
            <person name="Steegmaier M."/>
            <person name="Oorschot V."/>
            <person name="Klumperman J."/>
            <person name="Scheller R.H."/>
        </authorList>
    </citation>
    <scope>INTERACTION WITH STX17</scope>
</reference>
<reference key="5">
    <citation type="journal article" date="2009" name="EMBO J.">
        <title>Direct interaction between the COG complex and the SM protein, Sly1, is required for Golgi SNARE pairing.</title>
        <authorList>
            <person name="Laufman O."/>
            <person name="Kedan A."/>
            <person name="Hong W."/>
            <person name="Lev S."/>
        </authorList>
    </citation>
    <scope>FUNCTION</scope>
    <scope>INTERACTION WITH COG4</scope>
</reference>
<reference key="6">
    <citation type="journal article" date="2012" name="Nat. Commun.">
        <title>Quantitative maps of protein phosphorylation sites across 14 different rat organs and tissues.</title>
        <authorList>
            <person name="Lundby A."/>
            <person name="Secher A."/>
            <person name="Lage K."/>
            <person name="Nordsborg N.B."/>
            <person name="Dmytriyev A."/>
            <person name="Lundby C."/>
            <person name="Olsen J.V."/>
        </authorList>
    </citation>
    <scope>PHOSPHORYLATION [LARGE SCALE ANALYSIS] AT SER-32 AND SER-298</scope>
    <scope>IDENTIFICATION BY MASS SPECTROMETRY [LARGE SCALE ANALYSIS]</scope>
</reference>
<feature type="chain" id="PRO_0000206289" description="Sec1 family domain-containing protein 1">
    <location>
        <begin position="1"/>
        <end position="637"/>
    </location>
</feature>
<feature type="modified residue" description="Phosphoserine" evidence="8">
    <location>
        <position position="32"/>
    </location>
</feature>
<feature type="modified residue" description="Phosphoserine" evidence="8">
    <location>
        <position position="298"/>
    </location>
</feature>
<feature type="modified residue" description="Phosphoserine" evidence="1">
    <location>
        <position position="523"/>
    </location>
</feature>
<feature type="helix" evidence="9">
    <location>
        <begin position="9"/>
        <end position="21"/>
    </location>
</feature>
<feature type="strand" evidence="9">
    <location>
        <begin position="31"/>
        <end position="34"/>
    </location>
</feature>
<feature type="strand" evidence="9">
    <location>
        <begin position="39"/>
        <end position="43"/>
    </location>
</feature>
<feature type="helix" evidence="9">
    <location>
        <begin position="45"/>
        <end position="51"/>
    </location>
</feature>
<feature type="turn" evidence="9">
    <location>
        <begin position="52"/>
        <end position="54"/>
    </location>
</feature>
<feature type="helix" evidence="9">
    <location>
        <begin position="57"/>
        <end position="62"/>
    </location>
</feature>
<feature type="strand" evidence="9">
    <location>
        <begin position="65"/>
        <end position="70"/>
    </location>
</feature>
<feature type="strand" evidence="9">
    <location>
        <begin position="84"/>
        <end position="87"/>
    </location>
</feature>
<feature type="helix" evidence="9">
    <location>
        <begin position="91"/>
        <end position="103"/>
    </location>
</feature>
<feature type="strand" evidence="9">
    <location>
        <begin position="106"/>
        <end position="115"/>
    </location>
</feature>
<feature type="helix" evidence="9">
    <location>
        <begin position="119"/>
        <end position="130"/>
    </location>
</feature>
<feature type="strand" evidence="9">
    <location>
        <begin position="135"/>
        <end position="139"/>
    </location>
</feature>
<feature type="turn" evidence="9">
    <location>
        <begin position="143"/>
        <end position="145"/>
    </location>
</feature>
<protein>
    <recommendedName>
        <fullName>Sec1 family domain-containing protein 1</fullName>
    </recommendedName>
    <alternativeName>
        <fullName>SLY1 homolog</fullName>
        <shortName>Sly1p</shortName>
    </alternativeName>
    <alternativeName>
        <fullName>Syntaxin-binding protein 1-like 2</fullName>
    </alternativeName>
    <alternativeName>
        <fullName>Vesicle transport-related protein Ra410</fullName>
    </alternativeName>
</protein>